<keyword id="KW-0903">Direct protein sequencing</keyword>
<keyword id="KW-0249">Electron transport</keyword>
<keyword id="KW-0349">Heme</keyword>
<keyword id="KW-0408">Iron</keyword>
<keyword id="KW-0479">Metal-binding</keyword>
<keyword id="KW-0574">Periplasm</keyword>
<keyword id="KW-0873">Pyrrolidone carboxylic acid</keyword>
<keyword id="KW-0732">Signal</keyword>
<keyword id="KW-0813">Transport</keyword>
<proteinExistence type="evidence at protein level"/>
<accession>Q56351</accession>
<sequence>MRGQDPSRLIRPAAMAGLLLFALVGAALPQAEPAVQIVPALDRLGRADVRGQIPPLGRPITDDVRRMRNYPEQPPVIPHSIDGYQLTVNTNRCMDCHKPQFTEGSGAPMISVTHFQDRDGQVLTDVTPRRYFCTACHVQQTDVQPLVPNQFRDGYRHAGGP</sequence>
<comment type="function">
    <text evidence="5 6">Electron transfer subunit of the periplasmic nitrate reductase complex NapAB. Receives electrons from the membrane-anchored tetraheme c-type NapC protein and transfers these to NapA subunit, thus allowing electron flow between membrane and periplasm. Essential for periplasmic nitrate reduction with nitrate as the terminal electron acceptor.</text>
</comment>
<comment type="biophysicochemical properties">
    <redoxPotential>
        <text evidence="5">E(0) are -15 mV and +80 mV.</text>
    </redoxPotential>
</comment>
<comment type="subunit">
    <text evidence="3 4 5">Component of the periplasmic nitrate reductase NapAB complex composed of NapA and NapB.</text>
</comment>
<comment type="subcellular location">
    <subcellularLocation>
        <location evidence="5">Periplasm</location>
    </subcellularLocation>
</comment>
<comment type="PTM">
    <text>Binds 2 heme C groups per subunit.</text>
</comment>
<comment type="PTM">
    <text>The N-terminus is blocked.</text>
</comment>
<comment type="similarity">
    <text evidence="7">Belongs to the NapB family.</text>
</comment>
<reference key="1">
    <citation type="journal article" date="1995" name="Biochem. J.">
        <title>The napEDABC gene cluster encoding the periplasmic nitrate reductase system of Thiosphaera pantotropha.</title>
        <authorList>
            <person name="Berks B.C."/>
            <person name="Richardson D.J."/>
            <person name="Reilly A."/>
            <person name="Willis A.C."/>
            <person name="Ferguson S.J."/>
        </authorList>
    </citation>
    <scope>NUCLEOTIDE SEQUENCE [GENOMIC DNA]</scope>
    <scope>PROTEIN SEQUENCE OF 94-118 AND 131-152</scope>
    <scope>SUBUNIT</scope>
    <scope>PTM</scope>
    <source>
        <strain>ATCC 35512 / DSM 2944 / CIP 106514 / LMD 82.5 / NBRC 102493 / NCCB 82005 / GB17</strain>
    </source>
</reference>
<reference key="2">
    <citation type="journal article" date="1994" name="Eur. J. Biochem.">
        <title>Purification and characterization of the periplasmic nitrate reductase from Thiosphaera pantotropha.</title>
        <authorList>
            <person name="Berks B.C."/>
            <person name="Richardson D.J."/>
            <person name="Robinson C."/>
            <person name="Reilly A."/>
            <person name="Aplin R.T."/>
            <person name="Ferguson S.J."/>
        </authorList>
    </citation>
    <scope>FUNCTION</scope>
    <scope>ABSORPTION SPECTROSCOPY</scope>
    <scope>BIOPHYSICOCHEMICAL PROPERTIES</scope>
    <scope>SUBUNIT</scope>
    <scope>SUBCELLULAR LOCATION</scope>
    <scope>PTM</scope>
    <scope>IDENTIFICATION BY MASS SPECTROMETRY</scope>
    <source>
        <strain>M-6</strain>
    </source>
</reference>
<reference key="3">
    <citation type="journal article" date="1994" name="FEBS Lett.">
        <title>Characterization of the paramagnetic iron-containing redox centres of Thiosphaera pantotropha periplasmic nitrate reductase.</title>
        <authorList>
            <person name="Breton J."/>
            <person name="Berks B.C."/>
            <person name="Reilly A."/>
            <person name="Thomson A.J."/>
            <person name="Ferguson S.J."/>
            <person name="Richardson D.J."/>
        </authorList>
    </citation>
    <scope>FUNCTION</scope>
    <scope>EPR SPECTROSCOPY</scope>
    <scope>PTM</scope>
    <source>
        <strain>M-6</strain>
    </source>
</reference>
<reference key="4">
    <citation type="journal article" date="2001" name="FEBS Lett.">
        <title>Assignment of haem ligands and detection of electronic absorption bands of molybdenum in the di-haem periplasmic nitrate reductase of Paracoccus pantotrophus.</title>
        <authorList>
            <person name="Butler C.S."/>
            <person name="Ferguson S.J."/>
            <person name="Berks B.C."/>
            <person name="Thomson A.J."/>
            <person name="Cheesman M.R."/>
            <person name="Richardson D.J."/>
        </authorList>
    </citation>
    <scope>EPR SPECTROSCOPY</scope>
    <scope>CIRCULAR DICHROISM</scope>
    <scope>SUBUNIT</scope>
    <scope>PTM</scope>
    <source>
        <strain>M-6</strain>
    </source>
</reference>
<protein>
    <recommendedName>
        <fullName>Periplasmic nitrate reductase, electron transfer subunit</fullName>
    </recommendedName>
    <alternativeName>
        <fullName>Cytochrome c552</fullName>
    </alternativeName>
    <alternativeName>
        <fullName>Diheme cytochrome c NapB</fullName>
    </alternativeName>
</protein>
<organism>
    <name type="scientific">Paracoccus pantotrophus</name>
    <name type="common">Thiosphaera pantotropha</name>
    <dbReference type="NCBI Taxonomy" id="82367"/>
    <lineage>
        <taxon>Bacteria</taxon>
        <taxon>Pseudomonadati</taxon>
        <taxon>Pseudomonadota</taxon>
        <taxon>Alphaproteobacteria</taxon>
        <taxon>Rhodobacterales</taxon>
        <taxon>Paracoccaceae</taxon>
        <taxon>Paracoccus</taxon>
    </lineage>
</organism>
<feature type="signal peptide" evidence="2">
    <location>
        <begin position="1"/>
        <end position="29"/>
    </location>
</feature>
<feature type="chain" id="PRO_0000006590" description="Periplasmic nitrate reductase, electron transfer subunit">
    <location>
        <begin position="30"/>
        <end position="161"/>
    </location>
</feature>
<feature type="binding site" description="axial binding residue" evidence="7">
    <location>
        <position position="79"/>
    </location>
    <ligand>
        <name>heme c</name>
        <dbReference type="ChEBI" id="CHEBI:61717"/>
        <label>1</label>
    </ligand>
    <ligandPart>
        <name>Fe</name>
        <dbReference type="ChEBI" id="CHEBI:18248"/>
    </ligandPart>
</feature>
<feature type="binding site" description="covalent" evidence="1">
    <location>
        <position position="93"/>
    </location>
    <ligand>
        <name>heme c</name>
        <dbReference type="ChEBI" id="CHEBI:61717"/>
        <label>1</label>
    </ligand>
</feature>
<feature type="binding site" description="covalent" evidence="1">
    <location>
        <position position="96"/>
    </location>
    <ligand>
        <name>heme c</name>
        <dbReference type="ChEBI" id="CHEBI:61717"/>
        <label>1</label>
    </ligand>
</feature>
<feature type="binding site" description="axial binding residue" evidence="7">
    <location>
        <position position="97"/>
    </location>
    <ligand>
        <name>heme c</name>
        <dbReference type="ChEBI" id="CHEBI:61717"/>
        <label>1</label>
    </ligand>
    <ligandPart>
        <name>Fe</name>
        <dbReference type="ChEBI" id="CHEBI:18248"/>
    </ligandPart>
</feature>
<feature type="binding site" description="axial binding residue" evidence="7">
    <location>
        <position position="114"/>
    </location>
    <ligand>
        <name>heme c</name>
        <dbReference type="ChEBI" id="CHEBI:61717"/>
        <label>2</label>
    </ligand>
    <ligandPart>
        <name>Fe</name>
        <dbReference type="ChEBI" id="CHEBI:18248"/>
    </ligandPart>
</feature>
<feature type="binding site" description="covalent" evidence="1">
    <location>
        <position position="133"/>
    </location>
    <ligand>
        <name>heme c</name>
        <dbReference type="ChEBI" id="CHEBI:61717"/>
        <label>2</label>
    </ligand>
</feature>
<feature type="binding site" description="covalent" evidence="1">
    <location>
        <position position="136"/>
    </location>
    <ligand>
        <name>heme c</name>
        <dbReference type="ChEBI" id="CHEBI:61717"/>
        <label>2</label>
    </ligand>
</feature>
<feature type="binding site" description="axial binding residue" evidence="7">
    <location>
        <position position="137"/>
    </location>
    <ligand>
        <name>heme c</name>
        <dbReference type="ChEBI" id="CHEBI:61717"/>
        <label>2</label>
    </ligand>
    <ligandPart>
        <name>Fe</name>
        <dbReference type="ChEBI" id="CHEBI:18248"/>
    </ligandPart>
</feature>
<feature type="modified residue" description="Pyrrolidone carboxylic acid" evidence="2">
    <location>
        <position position="30"/>
    </location>
</feature>
<gene>
    <name type="primary">napB</name>
</gene>
<name>NAPB_PARPN</name>
<dbReference type="EMBL" id="Z36773">
    <property type="protein sequence ID" value="CAA85347.1"/>
    <property type="molecule type" value="Genomic_DNA"/>
</dbReference>
<dbReference type="PIR" id="S56136">
    <property type="entry name" value="S56136"/>
</dbReference>
<dbReference type="SMR" id="Q56351"/>
<dbReference type="STRING" id="82367.SAMN04244567_03483"/>
<dbReference type="eggNOG" id="COG3043">
    <property type="taxonomic scope" value="Bacteria"/>
</dbReference>
<dbReference type="GO" id="GO:0042597">
    <property type="term" value="C:periplasmic space"/>
    <property type="evidence" value="ECO:0007669"/>
    <property type="project" value="UniProtKB-SubCell"/>
</dbReference>
<dbReference type="GO" id="GO:0046872">
    <property type="term" value="F:metal ion binding"/>
    <property type="evidence" value="ECO:0007669"/>
    <property type="project" value="UniProtKB-KW"/>
</dbReference>
<dbReference type="GO" id="GO:0009061">
    <property type="term" value="P:anaerobic respiration"/>
    <property type="evidence" value="ECO:0007669"/>
    <property type="project" value="InterPro"/>
</dbReference>
<dbReference type="FunFam" id="1.10.1130.10:FF:000001">
    <property type="entry name" value="Periplasmic nitrate reductase, electron transfer subunit"/>
    <property type="match status" value="1"/>
</dbReference>
<dbReference type="Gene3D" id="1.10.1130.10">
    <property type="entry name" value="Flavocytochrome C3, Chain A"/>
    <property type="match status" value="1"/>
</dbReference>
<dbReference type="InterPro" id="IPR036280">
    <property type="entry name" value="Multihaem_cyt_sf"/>
</dbReference>
<dbReference type="InterPro" id="IPR005591">
    <property type="entry name" value="NapB"/>
</dbReference>
<dbReference type="PANTHER" id="PTHR38604">
    <property type="entry name" value="PERIPLASMIC NITRATE REDUCTASE, ELECTRON TRANSFER SUBUNIT"/>
    <property type="match status" value="1"/>
</dbReference>
<dbReference type="PANTHER" id="PTHR38604:SF1">
    <property type="entry name" value="PERIPLASMIC NITRATE REDUCTASE, ELECTRON TRANSFER SUBUNIT"/>
    <property type="match status" value="1"/>
</dbReference>
<dbReference type="Pfam" id="PF03892">
    <property type="entry name" value="NapB"/>
    <property type="match status" value="1"/>
</dbReference>
<dbReference type="PIRSF" id="PIRSF006105">
    <property type="entry name" value="NapB"/>
    <property type="match status" value="1"/>
</dbReference>
<dbReference type="SUPFAM" id="SSF48695">
    <property type="entry name" value="Multiheme cytochromes"/>
    <property type="match status" value="1"/>
</dbReference>
<dbReference type="PROSITE" id="PS51008">
    <property type="entry name" value="MULTIHEME_CYTC"/>
    <property type="match status" value="1"/>
</dbReference>
<evidence type="ECO:0000250" key="1"/>
<evidence type="ECO:0000255" key="2"/>
<evidence type="ECO:0000269" key="3">
    <source>
    </source>
</evidence>
<evidence type="ECO:0000269" key="4">
    <source>
    </source>
</evidence>
<evidence type="ECO:0000269" key="5">
    <source>
    </source>
</evidence>
<evidence type="ECO:0000269" key="6">
    <source>
    </source>
</evidence>
<evidence type="ECO:0000305" key="7"/>